<dbReference type="EMBL" id="AB062677">
    <property type="protein sequence ID" value="BAB62105.1"/>
    <property type="molecule type" value="mRNA"/>
</dbReference>
<dbReference type="EMBL" id="AE014296">
    <property type="protein sequence ID" value="AAF49343.1"/>
    <property type="molecule type" value="Genomic_DNA"/>
</dbReference>
<dbReference type="EMBL" id="AY129459">
    <property type="protein sequence ID" value="AAM76201.1"/>
    <property type="molecule type" value="mRNA"/>
</dbReference>
<dbReference type="RefSeq" id="NP_001137962.1">
    <property type="nucleotide sequence ID" value="NM_001144490.3"/>
</dbReference>
<dbReference type="RefSeq" id="NP_524126.1">
    <property type="nucleotide sequence ID" value="NM_079402.4"/>
</dbReference>
<dbReference type="SMR" id="Q95YI5"/>
<dbReference type="BioGRID" id="65232">
    <property type="interactions" value="3"/>
</dbReference>
<dbReference type="DIP" id="DIP-23605N"/>
<dbReference type="FunCoup" id="Q95YI5">
    <property type="interactions" value="430"/>
</dbReference>
<dbReference type="IntAct" id="Q95YI5">
    <property type="interactions" value="2"/>
</dbReference>
<dbReference type="STRING" id="7227.FBpp0289098"/>
<dbReference type="TCDB" id="2.A.7.15.3">
    <property type="family name" value="the drug/metabolite transporter (dmt) superfamily"/>
</dbReference>
<dbReference type="iPTMnet" id="Q95YI5"/>
<dbReference type="PaxDb" id="7227-FBpp0289098"/>
<dbReference type="DNASU" id="39943"/>
<dbReference type="EnsemblMetazoa" id="FBtr0075228">
    <property type="protein sequence ID" value="FBpp0074990"/>
    <property type="gene ID" value="FBgn0042641"/>
</dbReference>
<dbReference type="EnsemblMetazoa" id="FBtr0299820">
    <property type="protein sequence ID" value="FBpp0289098"/>
    <property type="gene ID" value="FBgn0042641"/>
</dbReference>
<dbReference type="GeneID" id="39943"/>
<dbReference type="KEGG" id="dme:Dmel_CG3874"/>
<dbReference type="AGR" id="FB:FBgn0042641"/>
<dbReference type="CTD" id="39943"/>
<dbReference type="FlyBase" id="FBgn0042641">
    <property type="gene designation" value="frc"/>
</dbReference>
<dbReference type="VEuPathDB" id="VectorBase:FBgn0042641"/>
<dbReference type="eggNOG" id="KOG1444">
    <property type="taxonomic scope" value="Eukaryota"/>
</dbReference>
<dbReference type="GeneTree" id="ENSGT00940000167969"/>
<dbReference type="HOGENOM" id="CLU_040726_1_1_1"/>
<dbReference type="InParanoid" id="Q95YI5"/>
<dbReference type="OMA" id="VWMLINC"/>
<dbReference type="OrthoDB" id="417037at2759"/>
<dbReference type="PhylomeDB" id="Q95YI5"/>
<dbReference type="Reactome" id="R-DME-173599">
    <property type="pathway name" value="Formation of the active cofactor, UDP-glucuronate"/>
</dbReference>
<dbReference type="Reactome" id="R-DME-2022854">
    <property type="pathway name" value="Keratan sulfate biosynthesis"/>
</dbReference>
<dbReference type="Reactome" id="R-DME-2022928">
    <property type="pathway name" value="HS-GAG biosynthesis"/>
</dbReference>
<dbReference type="Reactome" id="R-DME-727802">
    <property type="pathway name" value="Transport of nucleotide sugars"/>
</dbReference>
<dbReference type="SignaLink" id="Q95YI5"/>
<dbReference type="BioGRID-ORCS" id="39943">
    <property type="hits" value="0 hits in 3 CRISPR screens"/>
</dbReference>
<dbReference type="GenomeRNAi" id="39943"/>
<dbReference type="PRO" id="PR:Q95YI5"/>
<dbReference type="Proteomes" id="UP000000803">
    <property type="component" value="Chromosome 3L"/>
</dbReference>
<dbReference type="Bgee" id="FBgn0042641">
    <property type="expression patterns" value="Expressed in digestive system element and 13 other cell types or tissues"/>
</dbReference>
<dbReference type="GO" id="GO:0005794">
    <property type="term" value="C:Golgi apparatus"/>
    <property type="evidence" value="ECO:0000318"/>
    <property type="project" value="GO_Central"/>
</dbReference>
<dbReference type="GO" id="GO:0005797">
    <property type="term" value="C:Golgi medial cisterna"/>
    <property type="evidence" value="ECO:0000314"/>
    <property type="project" value="FlyBase"/>
</dbReference>
<dbReference type="GO" id="GO:0000139">
    <property type="term" value="C:Golgi membrane"/>
    <property type="evidence" value="ECO:0007669"/>
    <property type="project" value="UniProtKB-SubCell"/>
</dbReference>
<dbReference type="GO" id="GO:0015297">
    <property type="term" value="F:antiporter activity"/>
    <property type="evidence" value="ECO:0000314"/>
    <property type="project" value="FlyBase"/>
</dbReference>
<dbReference type="GO" id="GO:0005459">
    <property type="term" value="F:UDP-galactose transmembrane transporter activity"/>
    <property type="evidence" value="ECO:0000314"/>
    <property type="project" value="FlyBase"/>
</dbReference>
<dbReference type="GO" id="GO:0005460">
    <property type="term" value="F:UDP-glucose transmembrane transporter activity"/>
    <property type="evidence" value="ECO:0000314"/>
    <property type="project" value="FlyBase"/>
</dbReference>
<dbReference type="GO" id="GO:0005461">
    <property type="term" value="F:UDP-glucuronate transmembrane transporter activity"/>
    <property type="evidence" value="ECO:0000314"/>
    <property type="project" value="FlyBase"/>
</dbReference>
<dbReference type="GO" id="GO:0005463">
    <property type="term" value="F:UDP-N-acetylgalactosamine transmembrane transporter activity"/>
    <property type="evidence" value="ECO:0000318"/>
    <property type="project" value="GO_Central"/>
</dbReference>
<dbReference type="GO" id="GO:0005462">
    <property type="term" value="F:UDP-N-acetylglucosamine transmembrane transporter activity"/>
    <property type="evidence" value="ECO:0000314"/>
    <property type="project" value="FlyBase"/>
</dbReference>
<dbReference type="GO" id="GO:0005464">
    <property type="term" value="F:UDP-xylose transmembrane transporter activity"/>
    <property type="evidence" value="ECO:0000314"/>
    <property type="project" value="FlyBase"/>
</dbReference>
<dbReference type="GO" id="GO:0001745">
    <property type="term" value="P:compound eye morphogenesis"/>
    <property type="evidence" value="ECO:0000315"/>
    <property type="project" value="FlyBase"/>
</dbReference>
<dbReference type="GO" id="GO:0009880">
    <property type="term" value="P:embryonic pattern specification"/>
    <property type="evidence" value="ECO:0000315"/>
    <property type="project" value="FlyBase"/>
</dbReference>
<dbReference type="GO" id="GO:0007447">
    <property type="term" value="P:imaginal disc pattern formation"/>
    <property type="evidence" value="ECO:0000315"/>
    <property type="project" value="FlyBase"/>
</dbReference>
<dbReference type="GO" id="GO:0007476">
    <property type="term" value="P:imaginal disc-derived wing morphogenesis"/>
    <property type="evidence" value="ECO:0000315"/>
    <property type="project" value="FlyBase"/>
</dbReference>
<dbReference type="GO" id="GO:0015780">
    <property type="term" value="P:nucleotide-sugar transmembrane transport"/>
    <property type="evidence" value="ECO:0000318"/>
    <property type="project" value="GO_Central"/>
</dbReference>
<dbReference type="GO" id="GO:0007367">
    <property type="term" value="P:segment polarity determination"/>
    <property type="evidence" value="ECO:0000315"/>
    <property type="project" value="FlyBase"/>
</dbReference>
<dbReference type="GO" id="GO:0007423">
    <property type="term" value="P:sensory organ development"/>
    <property type="evidence" value="ECO:0000315"/>
    <property type="project" value="FlyBase"/>
</dbReference>
<dbReference type="GO" id="GO:0072334">
    <property type="term" value="P:UDP-galactose transmembrane transport"/>
    <property type="evidence" value="ECO:0000314"/>
    <property type="project" value="FlyBase"/>
</dbReference>
<dbReference type="GO" id="GO:0015786">
    <property type="term" value="P:UDP-glucose transmembrane transport"/>
    <property type="evidence" value="ECO:0000314"/>
    <property type="project" value="FlyBase"/>
</dbReference>
<dbReference type="GO" id="GO:0015787">
    <property type="term" value="P:UDP-glucuronate transmembrane transport"/>
    <property type="evidence" value="ECO:0000314"/>
    <property type="project" value="FlyBase"/>
</dbReference>
<dbReference type="GO" id="GO:1990569">
    <property type="term" value="P:UDP-N-acetylglucosamine transmembrane transport"/>
    <property type="evidence" value="ECO:0000314"/>
    <property type="project" value="FlyBase"/>
</dbReference>
<dbReference type="GO" id="GO:0015790">
    <property type="term" value="P:UDP-xylose transmembrane transport"/>
    <property type="evidence" value="ECO:0000314"/>
    <property type="project" value="FlyBase"/>
</dbReference>
<dbReference type="InterPro" id="IPR004853">
    <property type="entry name" value="Sugar_P_trans_dom"/>
</dbReference>
<dbReference type="InterPro" id="IPR050186">
    <property type="entry name" value="TPT_transporter"/>
</dbReference>
<dbReference type="PANTHER" id="PTHR11132">
    <property type="entry name" value="SOLUTE CARRIER FAMILY 35"/>
    <property type="match status" value="1"/>
</dbReference>
<dbReference type="Pfam" id="PF03151">
    <property type="entry name" value="TPT"/>
    <property type="match status" value="1"/>
</dbReference>
<sequence length="373" mass="41182">MSMSRGGNTTLDLQPLLAESDVGNRELEEKMGGSADRSSLLDGSGSKELSHREREDSALFVKKIGSALFYGLSSFMITVVNKTVLTSYHFPSFLFLSLGQLTASIVVLGMGKRLKLVNFPPLQRNTFAKIFPLPLIFLGNMMFGLGGTKTLSLPMFAALRRFSILMTMLLELKILGLRPSNAVQVSVYAMIGGALLAASDDLSFNMRGYIYVMITNALTASNGVYVKKKLDTSEIGKYGLMYYNSLFMFLPALALNYVTGNLDQALNFEQWNDSVFVVQFLLSCVMGFILSYSTILCTQFNSALTTTIVGCLKNICVTYLGMFIGGDYVFSWLNCIGINISVLASLLYTYVTFRRKRAPDKQDHLPSTRGENV</sequence>
<keyword id="KW-0333">Golgi apparatus</keyword>
<keyword id="KW-0472">Membrane</keyword>
<keyword id="KW-0597">Phosphoprotein</keyword>
<keyword id="KW-1185">Reference proteome</keyword>
<keyword id="KW-0762">Sugar transport</keyword>
<keyword id="KW-0812">Transmembrane</keyword>
<keyword id="KW-1133">Transmembrane helix</keyword>
<keyword id="KW-0813">Transport</keyword>
<reference key="1">
    <citation type="journal article" date="2001" name="Nat. Cell Biol.">
        <title>UDP-sugar transporter implicated in glycosylation and processing of Notch.</title>
        <authorList>
            <person name="Goto S."/>
            <person name="Taniguchi M."/>
            <person name="Muraoka M."/>
            <person name="Toyoda H."/>
            <person name="Sado Y."/>
            <person name="Kawakita M."/>
            <person name="Hayashi S."/>
        </authorList>
    </citation>
    <scope>NUCLEOTIDE SEQUENCE [MRNA]</scope>
</reference>
<reference key="2">
    <citation type="journal article" date="2000" name="Science">
        <title>The genome sequence of Drosophila melanogaster.</title>
        <authorList>
            <person name="Adams M.D."/>
            <person name="Celniker S.E."/>
            <person name="Holt R.A."/>
            <person name="Evans C.A."/>
            <person name="Gocayne J.D."/>
            <person name="Amanatides P.G."/>
            <person name="Scherer S.E."/>
            <person name="Li P.W."/>
            <person name="Hoskins R.A."/>
            <person name="Galle R.F."/>
            <person name="George R.A."/>
            <person name="Lewis S.E."/>
            <person name="Richards S."/>
            <person name="Ashburner M."/>
            <person name="Henderson S.N."/>
            <person name="Sutton G.G."/>
            <person name="Wortman J.R."/>
            <person name="Yandell M.D."/>
            <person name="Zhang Q."/>
            <person name="Chen L.X."/>
            <person name="Brandon R.C."/>
            <person name="Rogers Y.-H.C."/>
            <person name="Blazej R.G."/>
            <person name="Champe M."/>
            <person name="Pfeiffer B.D."/>
            <person name="Wan K.H."/>
            <person name="Doyle C."/>
            <person name="Baxter E.G."/>
            <person name="Helt G."/>
            <person name="Nelson C.R."/>
            <person name="Miklos G.L.G."/>
            <person name="Abril J.F."/>
            <person name="Agbayani A."/>
            <person name="An H.-J."/>
            <person name="Andrews-Pfannkoch C."/>
            <person name="Baldwin D."/>
            <person name="Ballew R.M."/>
            <person name="Basu A."/>
            <person name="Baxendale J."/>
            <person name="Bayraktaroglu L."/>
            <person name="Beasley E.M."/>
            <person name="Beeson K.Y."/>
            <person name="Benos P.V."/>
            <person name="Berman B.P."/>
            <person name="Bhandari D."/>
            <person name="Bolshakov S."/>
            <person name="Borkova D."/>
            <person name="Botchan M.R."/>
            <person name="Bouck J."/>
            <person name="Brokstein P."/>
            <person name="Brottier P."/>
            <person name="Burtis K.C."/>
            <person name="Busam D.A."/>
            <person name="Butler H."/>
            <person name="Cadieu E."/>
            <person name="Center A."/>
            <person name="Chandra I."/>
            <person name="Cherry J.M."/>
            <person name="Cawley S."/>
            <person name="Dahlke C."/>
            <person name="Davenport L.B."/>
            <person name="Davies P."/>
            <person name="de Pablos B."/>
            <person name="Delcher A."/>
            <person name="Deng Z."/>
            <person name="Mays A.D."/>
            <person name="Dew I."/>
            <person name="Dietz S.M."/>
            <person name="Dodson K."/>
            <person name="Doup L.E."/>
            <person name="Downes M."/>
            <person name="Dugan-Rocha S."/>
            <person name="Dunkov B.C."/>
            <person name="Dunn P."/>
            <person name="Durbin K.J."/>
            <person name="Evangelista C.C."/>
            <person name="Ferraz C."/>
            <person name="Ferriera S."/>
            <person name="Fleischmann W."/>
            <person name="Fosler C."/>
            <person name="Gabrielian A.E."/>
            <person name="Garg N.S."/>
            <person name="Gelbart W.M."/>
            <person name="Glasser K."/>
            <person name="Glodek A."/>
            <person name="Gong F."/>
            <person name="Gorrell J.H."/>
            <person name="Gu Z."/>
            <person name="Guan P."/>
            <person name="Harris M."/>
            <person name="Harris N.L."/>
            <person name="Harvey D.A."/>
            <person name="Heiman T.J."/>
            <person name="Hernandez J.R."/>
            <person name="Houck J."/>
            <person name="Hostin D."/>
            <person name="Houston K.A."/>
            <person name="Howland T.J."/>
            <person name="Wei M.-H."/>
            <person name="Ibegwam C."/>
            <person name="Jalali M."/>
            <person name="Kalush F."/>
            <person name="Karpen G.H."/>
            <person name="Ke Z."/>
            <person name="Kennison J.A."/>
            <person name="Ketchum K.A."/>
            <person name="Kimmel B.E."/>
            <person name="Kodira C.D."/>
            <person name="Kraft C.L."/>
            <person name="Kravitz S."/>
            <person name="Kulp D."/>
            <person name="Lai Z."/>
            <person name="Lasko P."/>
            <person name="Lei Y."/>
            <person name="Levitsky A.A."/>
            <person name="Li J.H."/>
            <person name="Li Z."/>
            <person name="Liang Y."/>
            <person name="Lin X."/>
            <person name="Liu X."/>
            <person name="Mattei B."/>
            <person name="McIntosh T.C."/>
            <person name="McLeod M.P."/>
            <person name="McPherson D."/>
            <person name="Merkulov G."/>
            <person name="Milshina N.V."/>
            <person name="Mobarry C."/>
            <person name="Morris J."/>
            <person name="Moshrefi A."/>
            <person name="Mount S.M."/>
            <person name="Moy M."/>
            <person name="Murphy B."/>
            <person name="Murphy L."/>
            <person name="Muzny D.M."/>
            <person name="Nelson D.L."/>
            <person name="Nelson D.R."/>
            <person name="Nelson K.A."/>
            <person name="Nixon K."/>
            <person name="Nusskern D.R."/>
            <person name="Pacleb J.M."/>
            <person name="Palazzolo M."/>
            <person name="Pittman G.S."/>
            <person name="Pan S."/>
            <person name="Pollard J."/>
            <person name="Puri V."/>
            <person name="Reese M.G."/>
            <person name="Reinert K."/>
            <person name="Remington K."/>
            <person name="Saunders R.D.C."/>
            <person name="Scheeler F."/>
            <person name="Shen H."/>
            <person name="Shue B.C."/>
            <person name="Siden-Kiamos I."/>
            <person name="Simpson M."/>
            <person name="Skupski M.P."/>
            <person name="Smith T.J."/>
            <person name="Spier E."/>
            <person name="Spradling A.C."/>
            <person name="Stapleton M."/>
            <person name="Strong R."/>
            <person name="Sun E."/>
            <person name="Svirskas R."/>
            <person name="Tector C."/>
            <person name="Turner R."/>
            <person name="Venter E."/>
            <person name="Wang A.H."/>
            <person name="Wang X."/>
            <person name="Wang Z.-Y."/>
            <person name="Wassarman D.A."/>
            <person name="Weinstock G.M."/>
            <person name="Weissenbach J."/>
            <person name="Williams S.M."/>
            <person name="Woodage T."/>
            <person name="Worley K.C."/>
            <person name="Wu D."/>
            <person name="Yang S."/>
            <person name="Yao Q.A."/>
            <person name="Ye J."/>
            <person name="Yeh R.-F."/>
            <person name="Zaveri J.S."/>
            <person name="Zhan M."/>
            <person name="Zhang G."/>
            <person name="Zhao Q."/>
            <person name="Zheng L."/>
            <person name="Zheng X.H."/>
            <person name="Zhong F.N."/>
            <person name="Zhong W."/>
            <person name="Zhou X."/>
            <person name="Zhu S.C."/>
            <person name="Zhu X."/>
            <person name="Smith H.O."/>
            <person name="Gibbs R.A."/>
            <person name="Myers E.W."/>
            <person name="Rubin G.M."/>
            <person name="Venter J.C."/>
        </authorList>
    </citation>
    <scope>NUCLEOTIDE SEQUENCE [LARGE SCALE GENOMIC DNA]</scope>
    <source>
        <strain>Berkeley</strain>
    </source>
</reference>
<reference key="3">
    <citation type="journal article" date="2002" name="Genome Biol.">
        <title>Annotation of the Drosophila melanogaster euchromatic genome: a systematic review.</title>
        <authorList>
            <person name="Misra S."/>
            <person name="Crosby M.A."/>
            <person name="Mungall C.J."/>
            <person name="Matthews B.B."/>
            <person name="Campbell K.S."/>
            <person name="Hradecky P."/>
            <person name="Huang Y."/>
            <person name="Kaminker J.S."/>
            <person name="Millburn G.H."/>
            <person name="Prochnik S.E."/>
            <person name="Smith C.D."/>
            <person name="Tupy J.L."/>
            <person name="Whitfield E.J."/>
            <person name="Bayraktaroglu L."/>
            <person name="Berman B.P."/>
            <person name="Bettencourt B.R."/>
            <person name="Celniker S.E."/>
            <person name="de Grey A.D.N.J."/>
            <person name="Drysdale R.A."/>
            <person name="Harris N.L."/>
            <person name="Richter J."/>
            <person name="Russo S."/>
            <person name="Schroeder A.J."/>
            <person name="Shu S.Q."/>
            <person name="Stapleton M."/>
            <person name="Yamada C."/>
            <person name="Ashburner M."/>
            <person name="Gelbart W.M."/>
            <person name="Rubin G.M."/>
            <person name="Lewis S.E."/>
        </authorList>
    </citation>
    <scope>GENOME REANNOTATION</scope>
    <source>
        <strain>Berkeley</strain>
    </source>
</reference>
<reference key="4">
    <citation type="journal article" date="2002" name="Genome Biol.">
        <title>A Drosophila full-length cDNA resource.</title>
        <authorList>
            <person name="Stapleton M."/>
            <person name="Carlson J.W."/>
            <person name="Brokstein P."/>
            <person name="Yu C."/>
            <person name="Champe M."/>
            <person name="George R.A."/>
            <person name="Guarin H."/>
            <person name="Kronmiller B."/>
            <person name="Pacleb J.M."/>
            <person name="Park S."/>
            <person name="Wan K.H."/>
            <person name="Rubin G.M."/>
            <person name="Celniker S.E."/>
        </authorList>
    </citation>
    <scope>NUCLEOTIDE SEQUENCE [LARGE SCALE MRNA]</scope>
    <source>
        <strain>Berkeley</strain>
        <tissue>Head</tissue>
    </source>
</reference>
<reference key="5">
    <citation type="journal article" date="2008" name="J. Proteome Res.">
        <title>Phosphoproteome analysis of Drosophila melanogaster embryos.</title>
        <authorList>
            <person name="Zhai B."/>
            <person name="Villen J."/>
            <person name="Beausoleil S.A."/>
            <person name="Mintseris J."/>
            <person name="Gygi S.P."/>
        </authorList>
    </citation>
    <scope>PHOSPHORYLATION [LARGE SCALE ANALYSIS] AT SER-50</scope>
    <scope>IDENTIFICATION BY MASS SPECTROMETRY</scope>
    <source>
        <tissue>Embryo</tissue>
    </source>
</reference>
<evidence type="ECO:0000255" key="1"/>
<evidence type="ECO:0000256" key="2">
    <source>
        <dbReference type="SAM" id="MobiDB-lite"/>
    </source>
</evidence>
<evidence type="ECO:0000269" key="3">
    <source>
    </source>
</evidence>
<evidence type="ECO:0000305" key="4"/>
<name>US74C_DROME</name>
<feature type="chain" id="PRO_0000213396" description="UDP-sugar transporter UST74c">
    <location>
        <begin position="1"/>
        <end position="373"/>
    </location>
</feature>
<feature type="transmembrane region" description="Helical" evidence="1">
    <location>
        <begin position="89"/>
        <end position="111"/>
    </location>
</feature>
<feature type="transmembrane region" description="Helical" evidence="1">
    <location>
        <begin position="131"/>
        <end position="153"/>
    </location>
</feature>
<feature type="transmembrane region" description="Helical" evidence="1">
    <location>
        <begin position="174"/>
        <end position="196"/>
    </location>
</feature>
<feature type="transmembrane region" description="Helical" evidence="1">
    <location>
        <begin position="206"/>
        <end position="225"/>
    </location>
</feature>
<feature type="transmembrane region" description="Helical" evidence="1">
    <location>
        <begin position="238"/>
        <end position="260"/>
    </location>
</feature>
<feature type="transmembrane region" description="Helical" evidence="1">
    <location>
        <begin position="275"/>
        <end position="297"/>
    </location>
</feature>
<feature type="transmembrane region" description="Helical" evidence="1">
    <location>
        <begin position="302"/>
        <end position="324"/>
    </location>
</feature>
<feature type="transmembrane region" description="Helical" evidence="1">
    <location>
        <begin position="329"/>
        <end position="351"/>
    </location>
</feature>
<feature type="region of interest" description="Disordered" evidence="2">
    <location>
        <begin position="27"/>
        <end position="49"/>
    </location>
</feature>
<feature type="modified residue" description="Phosphoserine" evidence="3">
    <location>
        <position position="50"/>
    </location>
</feature>
<feature type="sequence conflict" description="In Ref. 1; BAB62105." evidence="4" ref="1">
    <original>E</original>
    <variation>G</variation>
    <location>
        <position position="269"/>
    </location>
</feature>
<feature type="sequence conflict" description="In Ref. 1; BAB62105." evidence="4" ref="1">
    <original>V</original>
    <variation>L</variation>
    <location>
        <position position="275"/>
    </location>
</feature>
<gene>
    <name type="primary">frc</name>
    <name type="synonym">UST74C</name>
    <name type="ORF">CG3874</name>
</gene>
<accession>Q95YI5</accession>
<accession>Q9VVG8</accession>
<proteinExistence type="evidence at protein level"/>
<comment type="function">
    <text>Involved in the import of UDP-sugars from the cytoplasm into the Golgi lumen.</text>
</comment>
<comment type="subcellular location">
    <subcellularLocation>
        <location>Golgi apparatus membrane</location>
        <topology>Multi-pass membrane protein</topology>
    </subcellularLocation>
</comment>
<comment type="similarity">
    <text evidence="4">Belongs to the TPT transporter family. SLC35D subfamily.</text>
</comment>
<organism>
    <name type="scientific">Drosophila melanogaster</name>
    <name type="common">Fruit fly</name>
    <dbReference type="NCBI Taxonomy" id="7227"/>
    <lineage>
        <taxon>Eukaryota</taxon>
        <taxon>Metazoa</taxon>
        <taxon>Ecdysozoa</taxon>
        <taxon>Arthropoda</taxon>
        <taxon>Hexapoda</taxon>
        <taxon>Insecta</taxon>
        <taxon>Pterygota</taxon>
        <taxon>Neoptera</taxon>
        <taxon>Endopterygota</taxon>
        <taxon>Diptera</taxon>
        <taxon>Brachycera</taxon>
        <taxon>Muscomorpha</taxon>
        <taxon>Ephydroidea</taxon>
        <taxon>Drosophilidae</taxon>
        <taxon>Drosophila</taxon>
        <taxon>Sophophora</taxon>
    </lineage>
</organism>
<protein>
    <recommendedName>
        <fullName>UDP-sugar transporter UST74c</fullName>
    </recommendedName>
    <alternativeName>
        <fullName>Protein fringe connection</fullName>
    </alternativeName>
</protein>